<name>PLSY_BRUSI</name>
<organism>
    <name type="scientific">Brucella suis (strain ATCC 23445 / NCTC 10510)</name>
    <dbReference type="NCBI Taxonomy" id="470137"/>
    <lineage>
        <taxon>Bacteria</taxon>
        <taxon>Pseudomonadati</taxon>
        <taxon>Pseudomonadota</taxon>
        <taxon>Alphaproteobacteria</taxon>
        <taxon>Hyphomicrobiales</taxon>
        <taxon>Brucellaceae</taxon>
        <taxon>Brucella/Ochrobactrum group</taxon>
        <taxon>Brucella</taxon>
    </lineage>
</organism>
<comment type="function">
    <text evidence="1">Catalyzes the transfer of an acyl group from acyl-phosphate (acyl-PO(4)) to glycerol-3-phosphate (G3P) to form lysophosphatidic acid (LPA). This enzyme utilizes acyl-phosphate as fatty acyl donor, but not acyl-CoA or acyl-ACP.</text>
</comment>
<comment type="catalytic activity">
    <reaction evidence="1">
        <text>an acyl phosphate + sn-glycerol 3-phosphate = a 1-acyl-sn-glycero-3-phosphate + phosphate</text>
        <dbReference type="Rhea" id="RHEA:34075"/>
        <dbReference type="ChEBI" id="CHEBI:43474"/>
        <dbReference type="ChEBI" id="CHEBI:57597"/>
        <dbReference type="ChEBI" id="CHEBI:57970"/>
        <dbReference type="ChEBI" id="CHEBI:59918"/>
        <dbReference type="EC" id="2.3.1.275"/>
    </reaction>
</comment>
<comment type="pathway">
    <text evidence="1">Lipid metabolism; phospholipid metabolism.</text>
</comment>
<comment type="subunit">
    <text evidence="1">Probably interacts with PlsX.</text>
</comment>
<comment type="subcellular location">
    <subcellularLocation>
        <location evidence="1">Cell inner membrane</location>
        <topology evidence="1">Multi-pass membrane protein</topology>
    </subcellularLocation>
</comment>
<comment type="similarity">
    <text evidence="1">Belongs to the PlsY family.</text>
</comment>
<proteinExistence type="inferred from homology"/>
<reference key="1">
    <citation type="submission" date="2007-12" db="EMBL/GenBank/DDBJ databases">
        <title>Brucella suis ATCC 23445 whole genome shotgun sequencing project.</title>
        <authorList>
            <person name="Setubal J.C."/>
            <person name="Bowns C."/>
            <person name="Boyle S."/>
            <person name="Crasta O.R."/>
            <person name="Czar M.J."/>
            <person name="Dharmanolla C."/>
            <person name="Gillespie J.J."/>
            <person name="Kenyon R.W."/>
            <person name="Lu J."/>
            <person name="Mane S."/>
            <person name="Mohapatra S."/>
            <person name="Nagrani S."/>
            <person name="Purkayastha A."/>
            <person name="Rajasimha H.K."/>
            <person name="Shallom J.M."/>
            <person name="Shallom S."/>
            <person name="Shukla M."/>
            <person name="Snyder E.E."/>
            <person name="Sobral B.W."/>
            <person name="Wattam A.R."/>
            <person name="Will R."/>
            <person name="Williams K."/>
            <person name="Yoo H."/>
            <person name="Bruce D."/>
            <person name="Detter C."/>
            <person name="Munk C."/>
            <person name="Brettin T.S."/>
        </authorList>
    </citation>
    <scope>NUCLEOTIDE SEQUENCE [LARGE SCALE GENOMIC DNA]</scope>
    <source>
        <strain>ATCC 23445 / NCTC 10510</strain>
    </source>
</reference>
<sequence>MAEPGFFNAMLIGALIFGYVLGSIPFGLILARLAGLGDVRAIGSGNIGATNVLRTGNKKLAAATLILDALKGTAAALIAAHFGQNAAIAAGFGAFIGHLFPVWIGFKGGKGVATYLGVLIGLAWAGALVFAAAWIVTALLTRYSSLSALVASLVVPIALYSRGNQALAALFAIMTVIVFIKHRANISRLLNGTESKIGAKG</sequence>
<protein>
    <recommendedName>
        <fullName evidence="1">Glycerol-3-phosphate acyltransferase</fullName>
    </recommendedName>
    <alternativeName>
        <fullName evidence="1">Acyl-PO4 G3P acyltransferase</fullName>
    </alternativeName>
    <alternativeName>
        <fullName evidence="1">Acyl-phosphate--glycerol-3-phosphate acyltransferase</fullName>
    </alternativeName>
    <alternativeName>
        <fullName evidence="1">G3P acyltransferase</fullName>
        <shortName evidence="1">GPAT</shortName>
        <ecNumber evidence="1">2.3.1.275</ecNumber>
    </alternativeName>
    <alternativeName>
        <fullName evidence="1">Lysophosphatidic acid synthase</fullName>
        <shortName evidence="1">LPA synthase</shortName>
    </alternativeName>
</protein>
<evidence type="ECO:0000255" key="1">
    <source>
        <dbReference type="HAMAP-Rule" id="MF_01043"/>
    </source>
</evidence>
<feature type="chain" id="PRO_1000084380" description="Glycerol-3-phosphate acyltransferase">
    <location>
        <begin position="1"/>
        <end position="201"/>
    </location>
</feature>
<feature type="transmembrane region" description="Helical" evidence="1">
    <location>
        <begin position="10"/>
        <end position="30"/>
    </location>
</feature>
<feature type="transmembrane region" description="Helical" evidence="1">
    <location>
        <begin position="60"/>
        <end position="80"/>
    </location>
</feature>
<feature type="transmembrane region" description="Helical" evidence="1">
    <location>
        <begin position="86"/>
        <end position="106"/>
    </location>
</feature>
<feature type="transmembrane region" description="Helical" evidence="1">
    <location>
        <begin position="116"/>
        <end position="136"/>
    </location>
</feature>
<feature type="transmembrane region" description="Helical" evidence="1">
    <location>
        <begin position="139"/>
        <end position="159"/>
    </location>
</feature>
<feature type="transmembrane region" description="Helical" evidence="1">
    <location>
        <begin position="166"/>
        <end position="186"/>
    </location>
</feature>
<keyword id="KW-0997">Cell inner membrane</keyword>
<keyword id="KW-1003">Cell membrane</keyword>
<keyword id="KW-0444">Lipid biosynthesis</keyword>
<keyword id="KW-0443">Lipid metabolism</keyword>
<keyword id="KW-0472">Membrane</keyword>
<keyword id="KW-0594">Phospholipid biosynthesis</keyword>
<keyword id="KW-1208">Phospholipid metabolism</keyword>
<keyword id="KW-0808">Transferase</keyword>
<keyword id="KW-0812">Transmembrane</keyword>
<keyword id="KW-1133">Transmembrane helix</keyword>
<dbReference type="EC" id="2.3.1.275" evidence="1"/>
<dbReference type="EMBL" id="CP000912">
    <property type="protein sequence ID" value="ABY39586.1"/>
    <property type="molecule type" value="Genomic_DNA"/>
</dbReference>
<dbReference type="RefSeq" id="WP_006073733.1">
    <property type="nucleotide sequence ID" value="NC_010167.1"/>
</dbReference>
<dbReference type="SMR" id="A9WYS0"/>
<dbReference type="KEGG" id="bmt:BSUIS_B0598"/>
<dbReference type="HOGENOM" id="CLU_081254_1_0_5"/>
<dbReference type="UniPathway" id="UPA00085"/>
<dbReference type="Proteomes" id="UP000008545">
    <property type="component" value="Chromosome II"/>
</dbReference>
<dbReference type="GO" id="GO:0005886">
    <property type="term" value="C:plasma membrane"/>
    <property type="evidence" value="ECO:0007669"/>
    <property type="project" value="UniProtKB-SubCell"/>
</dbReference>
<dbReference type="GO" id="GO:0043772">
    <property type="term" value="F:acyl-phosphate glycerol-3-phosphate acyltransferase activity"/>
    <property type="evidence" value="ECO:0007669"/>
    <property type="project" value="UniProtKB-UniRule"/>
</dbReference>
<dbReference type="GO" id="GO:0008654">
    <property type="term" value="P:phospholipid biosynthetic process"/>
    <property type="evidence" value="ECO:0007669"/>
    <property type="project" value="UniProtKB-UniRule"/>
</dbReference>
<dbReference type="HAMAP" id="MF_01043">
    <property type="entry name" value="PlsY"/>
    <property type="match status" value="1"/>
</dbReference>
<dbReference type="InterPro" id="IPR003811">
    <property type="entry name" value="G3P_acylTferase_PlsY"/>
</dbReference>
<dbReference type="NCBIfam" id="TIGR00023">
    <property type="entry name" value="glycerol-3-phosphate 1-O-acyltransferase PlsY"/>
    <property type="match status" value="1"/>
</dbReference>
<dbReference type="PANTHER" id="PTHR30309:SF0">
    <property type="entry name" value="GLYCEROL-3-PHOSPHATE ACYLTRANSFERASE-RELATED"/>
    <property type="match status" value="1"/>
</dbReference>
<dbReference type="PANTHER" id="PTHR30309">
    <property type="entry name" value="INNER MEMBRANE PROTEIN YGIH"/>
    <property type="match status" value="1"/>
</dbReference>
<dbReference type="Pfam" id="PF02660">
    <property type="entry name" value="G3P_acyltransf"/>
    <property type="match status" value="1"/>
</dbReference>
<dbReference type="SMART" id="SM01207">
    <property type="entry name" value="G3P_acyltransf"/>
    <property type="match status" value="1"/>
</dbReference>
<gene>
    <name evidence="1" type="primary">plsY</name>
    <name type="ordered locus">BSUIS_B0598</name>
</gene>
<accession>A9WYS0</accession>